<organismHost>
    <name type="scientific">Aves</name>
    <dbReference type="NCBI Taxonomy" id="8782"/>
</organismHost>
<keyword id="KW-1167">Clathrin- and caveolin-independent endocytosis of virus by host</keyword>
<keyword id="KW-1165">Clathrin-mediated endocytosis of virus by host</keyword>
<keyword id="KW-1015">Disulfide bond</keyword>
<keyword id="KW-1170">Fusion of virus membrane with host endosomal membrane</keyword>
<keyword id="KW-1168">Fusion of virus membrane with host membrane</keyword>
<keyword id="KW-0325">Glycoprotein</keyword>
<keyword id="KW-0348">Hemagglutinin</keyword>
<keyword id="KW-1032">Host cell membrane</keyword>
<keyword id="KW-1043">Host membrane</keyword>
<keyword id="KW-0945">Host-virus interaction</keyword>
<keyword id="KW-0449">Lipoprotein</keyword>
<keyword id="KW-0472">Membrane</keyword>
<keyword id="KW-0564">Palmitate</keyword>
<keyword id="KW-0732">Signal</keyword>
<keyword id="KW-0812">Transmembrane</keyword>
<keyword id="KW-1133">Transmembrane helix</keyword>
<keyword id="KW-1161">Viral attachment to host cell</keyword>
<keyword id="KW-0261">Viral envelope protein</keyword>
<keyword id="KW-1162">Viral penetration into host cytoplasm</keyword>
<keyword id="KW-0946">Virion</keyword>
<keyword id="KW-1164">Virus endocytosis by host</keyword>
<keyword id="KW-1160">Virus entry into host cell</keyword>
<organism>
    <name type="scientific">Influenza A virus (strain A/Chicken/Alabama/1/1975 H4N8)</name>
    <dbReference type="NCBI Taxonomy" id="11338"/>
    <lineage>
        <taxon>Viruses</taxon>
        <taxon>Riboviria</taxon>
        <taxon>Orthornavirae</taxon>
        <taxon>Negarnaviricota</taxon>
        <taxon>Polyploviricotina</taxon>
        <taxon>Insthoviricetes</taxon>
        <taxon>Articulavirales</taxon>
        <taxon>Orthomyxoviridae</taxon>
        <taxon>Alphainfluenzavirus</taxon>
        <taxon>Alphainfluenzavirus influenzae</taxon>
        <taxon>Influenza A virus</taxon>
    </lineage>
</organism>
<gene>
    <name evidence="1" type="primary">HA</name>
</gene>
<name>HEMA_I75A4</name>
<feature type="signal peptide" evidence="1">
    <location>
        <begin position="1"/>
        <end position="16"/>
    </location>
</feature>
<feature type="chain" id="PRO_0000440444" description="Hemagglutinin" evidence="1">
    <location>
        <begin position="17"/>
        <end position="564"/>
    </location>
</feature>
<feature type="chain" id="PRO_0000038891" description="Hemagglutinin HA1 chain">
    <location>
        <begin position="17"/>
        <end position="342"/>
    </location>
</feature>
<feature type="chain" id="PRO_0000038892" description="Hemagglutinin HA2 chain" evidence="1">
    <location>
        <begin position="344"/>
        <end position="564"/>
    </location>
</feature>
<feature type="topological domain" description="Extracellular" evidence="1">
    <location>
        <begin position="17"/>
        <end position="527"/>
    </location>
</feature>
<feature type="transmembrane region" description="Helical" evidence="1">
    <location>
        <begin position="528"/>
        <end position="548"/>
    </location>
</feature>
<feature type="topological domain" description="Cytoplasmic" evidence="1">
    <location>
        <begin position="549"/>
        <end position="564"/>
    </location>
</feature>
<feature type="site" description="Cleavage; by host" evidence="1">
    <location>
        <begin position="343"/>
        <end position="344"/>
    </location>
</feature>
<feature type="lipid moiety-binding region" description="S-palmitoyl cysteine; by host" evidence="1">
    <location>
        <position position="553"/>
    </location>
</feature>
<feature type="lipid moiety-binding region" description="S-palmitoyl cysteine; by host" evidence="1">
    <location>
        <position position="560"/>
    </location>
</feature>
<feature type="lipid moiety-binding region" description="S-palmitoyl cysteine; by host" evidence="1">
    <location>
        <position position="563"/>
    </location>
</feature>
<feature type="glycosylation site" description="N-linked (GlcNAc...) asparagine; by host" evidence="1">
    <location>
        <position position="18"/>
    </location>
</feature>
<feature type="glycosylation site" description="N-linked (GlcNAc...) asparagine; by host" evidence="1">
    <location>
        <position position="34"/>
    </location>
</feature>
<feature type="glycosylation site" description="N-linked (GlcNAc...) asparagine; by host" evidence="1">
    <location>
        <position position="178"/>
    </location>
</feature>
<feature type="glycosylation site" description="N-linked (GlcNAc...) asparagine; by host" evidence="1">
    <location>
        <position position="310"/>
    </location>
</feature>
<feature type="glycosylation site" description="N-linked (GlcNAc...) asparagine; by host" evidence="1">
    <location>
        <position position="497"/>
    </location>
</feature>
<feature type="disulfide bond" description="Interchain (between HA1 and HA2 chains)" evidence="1">
    <location>
        <begin position="26"/>
        <end position="480"/>
    </location>
</feature>
<feature type="disulfide bond" evidence="1">
    <location>
        <begin position="64"/>
        <end position="291"/>
    </location>
</feature>
<feature type="disulfide bond" evidence="1">
    <location>
        <begin position="76"/>
        <end position="88"/>
    </location>
</feature>
<feature type="disulfide bond" evidence="1">
    <location>
        <begin position="109"/>
        <end position="151"/>
    </location>
</feature>
<feature type="disulfide bond" evidence="1">
    <location>
        <begin position="295"/>
        <end position="319"/>
    </location>
</feature>
<feature type="disulfide bond" evidence="1">
    <location>
        <begin position="487"/>
        <end position="491"/>
    </location>
</feature>
<comment type="function">
    <text>Binds to sialic acid-containing receptors on the cell surface, bringing about the attachment of the virus particle to the cell. This attachment induces virion internalization of about two third of the virus particles through clathrin-dependent endocytosis and about one third through a clathrin- and caveolin-independent pathway. Plays a major role in the determination of host range restriction and virulence. Class I viral fusion protein. Responsible for penetration of the virus into the cell cytoplasm by mediating the fusion of the membrane of the endocytosed virus particle with the endosomal membrane. Low pH in endosomes induces an irreversible conformational change in HA2, releasing the fusion hydrophobic peptide. Several trimers are required to form a competent fusion pore.</text>
</comment>
<comment type="function">
    <text evidence="1">Binds to sialic acid-containing receptors on the cell surface, bringing about the attachment of the virus particle to the cell. This attachment induces virion internalization either through clathrin-dependent endocytosis or through clathrin- and caveolin-independent pathway. Plays a major role in the determination of host range restriction and virulence. Class I viral fusion protein. Responsible for penetration of the virus into the cell cytoplasm by mediating the fusion of the membrane of the endocytosed virus particle with the endosomal membrane. Low pH in endosomes induces an irreversible conformational change in HA2, releasing the fusion hydrophobic peptide. Several trimers are required to form a competent fusion pore.</text>
</comment>
<comment type="subunit">
    <text evidence="1">Homotrimer of disulfide-linked HA1-HA2.</text>
</comment>
<comment type="subcellular location">
    <subcellularLocation>
        <location evidence="1">Virion membrane</location>
        <topology evidence="1">Single-pass type I membrane protein</topology>
    </subcellularLocation>
    <subcellularLocation>
        <location evidence="1">Host apical cell membrane</location>
        <topology evidence="1">Single-pass type I membrane protein</topology>
    </subcellularLocation>
    <text evidence="1">Targeted to the apical plasma membrane in epithelial polarized cells through a signal present in the transmembrane domain. Associated with glycosphingolipid- and cholesterol-enriched detergent-resistant lipid rafts.</text>
</comment>
<comment type="PTM">
    <text evidence="1">Palmitoylated.</text>
</comment>
<comment type="PTM">
    <text evidence="1">In natural infection, inactive HA is matured into HA1 and HA2 outside the cell by one or more trypsin-like, arginine-specific endoprotease secreted by the bronchial epithelial cells. One identified protease that may be involved in this process is secreted in lungs by club cells.</text>
</comment>
<comment type="miscellaneous">
    <text>Major glycoprotein, comprises over 80% of the envelope proteins present in virus particle.</text>
</comment>
<comment type="miscellaneous">
    <text>The extent of infection into host organism is determined by HA. Influenza viruses bud from the apical surface of polarized epithelial cells (e.g. bronchial epithelial cells) into lumen of lungs and are therefore usually pneumotropic. The reason is that HA is cleaved by tryptase clara which is restricted to lungs. However, HAs of H5 and H7 pantropic avian viruses subtypes can be cleaved by furin and subtilisin-type enzymes, allowing the virus to grow in other organs than lungs.</text>
</comment>
<comment type="miscellaneous">
    <text evidence="2">The influenza A genome consist of 8 RNA segments. Genetic variation of hemagglutinin and/or neuraminidase genes results in the emergence of new influenza strains. The mechanism of variation can be the result of point mutations or the result of genetic reassortment between segments of two different strains.</text>
</comment>
<comment type="similarity">
    <text evidence="1">Belongs to the influenza viruses hemagglutinin family.</text>
</comment>
<proteinExistence type="inferred from homology"/>
<dbReference type="EMBL" id="M25288">
    <property type="protein sequence ID" value="AAA43221.1"/>
    <property type="molecule type" value="Genomic_RNA"/>
</dbReference>
<dbReference type="SMR" id="P19695"/>
<dbReference type="GlyCosmos" id="P19695">
    <property type="glycosylation" value="5 sites, No reported glycans"/>
</dbReference>
<dbReference type="GO" id="GO:0020002">
    <property type="term" value="C:host cell plasma membrane"/>
    <property type="evidence" value="ECO:0007669"/>
    <property type="project" value="UniProtKB-SubCell"/>
</dbReference>
<dbReference type="GO" id="GO:0016020">
    <property type="term" value="C:membrane"/>
    <property type="evidence" value="ECO:0007669"/>
    <property type="project" value="UniProtKB-UniRule"/>
</dbReference>
<dbReference type="GO" id="GO:0019031">
    <property type="term" value="C:viral envelope"/>
    <property type="evidence" value="ECO:0007669"/>
    <property type="project" value="UniProtKB-UniRule"/>
</dbReference>
<dbReference type="GO" id="GO:0055036">
    <property type="term" value="C:virion membrane"/>
    <property type="evidence" value="ECO:0007669"/>
    <property type="project" value="UniProtKB-SubCell"/>
</dbReference>
<dbReference type="GO" id="GO:0046789">
    <property type="term" value="F:host cell surface receptor binding"/>
    <property type="evidence" value="ECO:0007669"/>
    <property type="project" value="UniProtKB-UniRule"/>
</dbReference>
<dbReference type="GO" id="GO:0075512">
    <property type="term" value="P:clathrin-dependent endocytosis of virus by host cell"/>
    <property type="evidence" value="ECO:0007669"/>
    <property type="project" value="UniProtKB-UniRule"/>
</dbReference>
<dbReference type="GO" id="GO:0039654">
    <property type="term" value="P:fusion of virus membrane with host endosome membrane"/>
    <property type="evidence" value="ECO:0007669"/>
    <property type="project" value="UniProtKB-UniRule"/>
</dbReference>
<dbReference type="GO" id="GO:0019064">
    <property type="term" value="P:fusion of virus membrane with host plasma membrane"/>
    <property type="evidence" value="ECO:0007669"/>
    <property type="project" value="InterPro"/>
</dbReference>
<dbReference type="GO" id="GO:0046761">
    <property type="term" value="P:viral budding from plasma membrane"/>
    <property type="evidence" value="ECO:0007669"/>
    <property type="project" value="UniProtKB-UniRule"/>
</dbReference>
<dbReference type="GO" id="GO:0019062">
    <property type="term" value="P:virion attachment to host cell"/>
    <property type="evidence" value="ECO:0007669"/>
    <property type="project" value="UniProtKB-KW"/>
</dbReference>
<dbReference type="Gene3D" id="3.90.20.10">
    <property type="match status" value="1"/>
</dbReference>
<dbReference type="Gene3D" id="3.90.209.20">
    <property type="match status" value="1"/>
</dbReference>
<dbReference type="HAMAP" id="MF_04072">
    <property type="entry name" value="INFV_HEMA"/>
    <property type="match status" value="1"/>
</dbReference>
<dbReference type="InterPro" id="IPR008980">
    <property type="entry name" value="Capsid_hemagglutn"/>
</dbReference>
<dbReference type="InterPro" id="IPR013828">
    <property type="entry name" value="Hemagglutn_HA1_a/b_dom_sf"/>
</dbReference>
<dbReference type="InterPro" id="IPR000149">
    <property type="entry name" value="Hemagglutn_influenz_A"/>
</dbReference>
<dbReference type="InterPro" id="IPR001364">
    <property type="entry name" value="Hemagglutn_influenz_A/B"/>
</dbReference>
<dbReference type="Pfam" id="PF00509">
    <property type="entry name" value="Hemagglutinin"/>
    <property type="match status" value="1"/>
</dbReference>
<dbReference type="PRINTS" id="PR00330">
    <property type="entry name" value="HEMAGGLUTN1"/>
</dbReference>
<dbReference type="PRINTS" id="PR00329">
    <property type="entry name" value="HEMAGGLUTN12"/>
</dbReference>
<dbReference type="SUPFAM" id="SSF58064">
    <property type="entry name" value="Influenza hemagglutinin (stalk)"/>
    <property type="match status" value="1"/>
</dbReference>
<dbReference type="SUPFAM" id="SSF49818">
    <property type="entry name" value="Viral protein domain"/>
    <property type="match status" value="1"/>
</dbReference>
<protein>
    <recommendedName>
        <fullName evidence="1">Hemagglutinin</fullName>
    </recommendedName>
    <component>
        <recommendedName>
            <fullName evidence="1">Hemagglutinin HA1 chain</fullName>
        </recommendedName>
    </component>
    <component>
        <recommendedName>
            <fullName evidence="1">Hemagglutinin HA2 chain</fullName>
        </recommendedName>
    </component>
</protein>
<evidence type="ECO:0000255" key="1">
    <source>
        <dbReference type="HAMAP-Rule" id="MF_04072"/>
    </source>
</evidence>
<evidence type="ECO:0000305" key="2"/>
<sequence>MLSITILFLLIAEGSSQNYTGNPVICLGHHAVSNGTMVKTLTDDQVEVVTAQELVESQHLPELCPSPLRLVDGQTCDIVNGALGSPGCNHLNGAEWDVFIERPTAVDTCYPFDVPDYQSLRSILANNGKFEFIVEKFQWNTVKQNGKSGACKRANENDFFTNLNWLTKSDGNAYPLQNLTKVNNGDYARLYIWGVHHPSTDTEQTNLYENNPGRVTVSTKTSQTSVVPNIGSRPWVRGQSGRISFYWTIVEPGDIIVFNTIGNLIAPRGHYKLNSQKKSTILNTAVPIGSCVSKCHTDRGSITTTKPFQNISRISIGDCPKYVKQGSLKLATGMRNIPEKATRGLFGAIAGFIENGWQGLIDGWYGFRHQNAEGTGTAADLKSTQAAIDQINGKLNRLIEKTNEKYHQIEKEFEQVEGRIQDLEKYVEDTKIDLWSYNAELLVALENQHTIDVTDSEMDKLFERVRRQLRENAEDKGNGCFEIFHQCDNNCIESIRNGTYDHDIYRDEAINNRFQIQGVKLTQGYKDIILWISFSISCFLLVALLLAFILWACQNGNIRCQICI</sequence>
<accession>P19695</accession>
<reference key="1">
    <citation type="journal article" date="1989" name="Virology">
        <title>Distinct lineages of influenza virus H4 hemagglutinin genes in different regions of the world.</title>
        <authorList>
            <person name="Donis R.O."/>
            <person name="Bean W.J."/>
            <person name="Kawaoka Y."/>
            <person name="Webster R.G."/>
        </authorList>
    </citation>
    <scope>NUCLEOTIDE SEQUENCE [GENOMIC RNA]</scope>
</reference>